<protein>
    <recommendedName>
        <fullName evidence="1">NADH-quinone oxidoreductase subunit B</fullName>
        <ecNumber evidence="1">7.1.1.-</ecNumber>
    </recommendedName>
    <alternativeName>
        <fullName evidence="1">NADH dehydrogenase I subunit B</fullName>
    </alternativeName>
    <alternativeName>
        <fullName evidence="1">NDH-1 subunit B</fullName>
    </alternativeName>
</protein>
<sequence>MGLSDLSKAPGQALGDMLQLGNIESVIQWGRGNSLWPFPFATACCGIEYMSTACSDYDIARFGAERPSFSPRQADMILVLGTITYKMAPVLRQIYDQMAEPKFVISVGACASSGGMFNTYGVLQGVDRILPVDIYVPGCPPRPEAILDALVKLQTKLKTQGLEARRQEVMQKIQELNERNKPLVVR</sequence>
<proteinExistence type="inferred from homology"/>
<dbReference type="EC" id="7.1.1.-" evidence="1"/>
<dbReference type="EMBL" id="CP000348">
    <property type="protein sequence ID" value="ABJ79940.1"/>
    <property type="molecule type" value="Genomic_DNA"/>
</dbReference>
<dbReference type="RefSeq" id="WP_002754690.1">
    <property type="nucleotide sequence ID" value="NC_008508.1"/>
</dbReference>
<dbReference type="SMR" id="Q04YA5"/>
<dbReference type="KEGG" id="lbl:LBL_2577"/>
<dbReference type="HOGENOM" id="CLU_055737_7_3_12"/>
<dbReference type="GO" id="GO:0005886">
    <property type="term" value="C:plasma membrane"/>
    <property type="evidence" value="ECO:0007669"/>
    <property type="project" value="UniProtKB-SubCell"/>
</dbReference>
<dbReference type="GO" id="GO:0045271">
    <property type="term" value="C:respiratory chain complex I"/>
    <property type="evidence" value="ECO:0007669"/>
    <property type="project" value="TreeGrafter"/>
</dbReference>
<dbReference type="GO" id="GO:0051539">
    <property type="term" value="F:4 iron, 4 sulfur cluster binding"/>
    <property type="evidence" value="ECO:0007669"/>
    <property type="project" value="UniProtKB-KW"/>
</dbReference>
<dbReference type="GO" id="GO:0005506">
    <property type="term" value="F:iron ion binding"/>
    <property type="evidence" value="ECO:0007669"/>
    <property type="project" value="UniProtKB-UniRule"/>
</dbReference>
<dbReference type="GO" id="GO:0008137">
    <property type="term" value="F:NADH dehydrogenase (ubiquinone) activity"/>
    <property type="evidence" value="ECO:0007669"/>
    <property type="project" value="InterPro"/>
</dbReference>
<dbReference type="GO" id="GO:0050136">
    <property type="term" value="F:NADH:ubiquinone reductase (non-electrogenic) activity"/>
    <property type="evidence" value="ECO:0007669"/>
    <property type="project" value="UniProtKB-UniRule"/>
</dbReference>
<dbReference type="GO" id="GO:0048038">
    <property type="term" value="F:quinone binding"/>
    <property type="evidence" value="ECO:0007669"/>
    <property type="project" value="UniProtKB-KW"/>
</dbReference>
<dbReference type="GO" id="GO:0009060">
    <property type="term" value="P:aerobic respiration"/>
    <property type="evidence" value="ECO:0007669"/>
    <property type="project" value="TreeGrafter"/>
</dbReference>
<dbReference type="GO" id="GO:0015990">
    <property type="term" value="P:electron transport coupled proton transport"/>
    <property type="evidence" value="ECO:0007669"/>
    <property type="project" value="TreeGrafter"/>
</dbReference>
<dbReference type="FunFam" id="3.40.50.12280:FF:000002">
    <property type="entry name" value="NADH-quinone oxidoreductase subunit B"/>
    <property type="match status" value="1"/>
</dbReference>
<dbReference type="Gene3D" id="3.40.50.12280">
    <property type="match status" value="1"/>
</dbReference>
<dbReference type="HAMAP" id="MF_01356">
    <property type="entry name" value="NDH1_NuoB"/>
    <property type="match status" value="1"/>
</dbReference>
<dbReference type="InterPro" id="IPR006137">
    <property type="entry name" value="NADH_UbQ_OxRdtase-like_20kDa"/>
</dbReference>
<dbReference type="InterPro" id="IPR006138">
    <property type="entry name" value="NADH_UQ_OxRdtase_20Kd_su"/>
</dbReference>
<dbReference type="NCBIfam" id="TIGR01957">
    <property type="entry name" value="nuoB_fam"/>
    <property type="match status" value="1"/>
</dbReference>
<dbReference type="NCBIfam" id="NF005012">
    <property type="entry name" value="PRK06411.1"/>
    <property type="match status" value="1"/>
</dbReference>
<dbReference type="NCBIfam" id="NF011389">
    <property type="entry name" value="PRK14814.1"/>
    <property type="match status" value="1"/>
</dbReference>
<dbReference type="PANTHER" id="PTHR11995">
    <property type="entry name" value="NADH DEHYDROGENASE"/>
    <property type="match status" value="1"/>
</dbReference>
<dbReference type="PANTHER" id="PTHR11995:SF14">
    <property type="entry name" value="NADH DEHYDROGENASE [UBIQUINONE] IRON-SULFUR PROTEIN 7, MITOCHONDRIAL"/>
    <property type="match status" value="1"/>
</dbReference>
<dbReference type="Pfam" id="PF01058">
    <property type="entry name" value="Oxidored_q6"/>
    <property type="match status" value="1"/>
</dbReference>
<dbReference type="SUPFAM" id="SSF56770">
    <property type="entry name" value="HydA/Nqo6-like"/>
    <property type="match status" value="1"/>
</dbReference>
<dbReference type="PROSITE" id="PS01150">
    <property type="entry name" value="COMPLEX1_20K"/>
    <property type="match status" value="1"/>
</dbReference>
<reference key="1">
    <citation type="journal article" date="2006" name="Proc. Natl. Acad. Sci. U.S.A.">
        <title>Genome reduction in Leptospira borgpetersenii reflects limited transmission potential.</title>
        <authorList>
            <person name="Bulach D.M."/>
            <person name="Zuerner R.L."/>
            <person name="Wilson P."/>
            <person name="Seemann T."/>
            <person name="McGrath A."/>
            <person name="Cullen P.A."/>
            <person name="Davis J."/>
            <person name="Johnson M."/>
            <person name="Kuczek E."/>
            <person name="Alt D.P."/>
            <person name="Peterson-Burch B."/>
            <person name="Coppel R.L."/>
            <person name="Rood J.I."/>
            <person name="Davies J.K."/>
            <person name="Adler B."/>
        </authorList>
    </citation>
    <scope>NUCLEOTIDE SEQUENCE [LARGE SCALE GENOMIC DNA]</scope>
    <source>
        <strain>L550</strain>
    </source>
</reference>
<keyword id="KW-0004">4Fe-4S</keyword>
<keyword id="KW-0997">Cell inner membrane</keyword>
<keyword id="KW-1003">Cell membrane</keyword>
<keyword id="KW-0408">Iron</keyword>
<keyword id="KW-0411">Iron-sulfur</keyword>
<keyword id="KW-0472">Membrane</keyword>
<keyword id="KW-0479">Metal-binding</keyword>
<keyword id="KW-0520">NAD</keyword>
<keyword id="KW-0874">Quinone</keyword>
<keyword id="KW-1278">Translocase</keyword>
<keyword id="KW-0813">Transport</keyword>
<keyword id="KW-0830">Ubiquinone</keyword>
<organism>
    <name type="scientific">Leptospira borgpetersenii serovar Hardjo-bovis (strain L550)</name>
    <dbReference type="NCBI Taxonomy" id="355276"/>
    <lineage>
        <taxon>Bacteria</taxon>
        <taxon>Pseudomonadati</taxon>
        <taxon>Spirochaetota</taxon>
        <taxon>Spirochaetia</taxon>
        <taxon>Leptospirales</taxon>
        <taxon>Leptospiraceae</taxon>
        <taxon>Leptospira</taxon>
    </lineage>
</organism>
<accession>Q04YA5</accession>
<gene>
    <name evidence="1" type="primary">nuoB</name>
    <name type="ordered locus">LBL_2577</name>
</gene>
<name>NUOB_LEPBL</name>
<feature type="chain" id="PRO_0000376262" description="NADH-quinone oxidoreductase subunit B">
    <location>
        <begin position="1"/>
        <end position="186"/>
    </location>
</feature>
<feature type="binding site" evidence="1">
    <location>
        <position position="44"/>
    </location>
    <ligand>
        <name>[4Fe-4S] cluster</name>
        <dbReference type="ChEBI" id="CHEBI:49883"/>
    </ligand>
</feature>
<feature type="binding site" evidence="1">
    <location>
        <position position="45"/>
    </location>
    <ligand>
        <name>[4Fe-4S] cluster</name>
        <dbReference type="ChEBI" id="CHEBI:49883"/>
    </ligand>
</feature>
<feature type="binding site" evidence="1">
    <location>
        <position position="110"/>
    </location>
    <ligand>
        <name>[4Fe-4S] cluster</name>
        <dbReference type="ChEBI" id="CHEBI:49883"/>
    </ligand>
</feature>
<feature type="binding site" evidence="1">
    <location>
        <position position="139"/>
    </location>
    <ligand>
        <name>[4Fe-4S] cluster</name>
        <dbReference type="ChEBI" id="CHEBI:49883"/>
    </ligand>
</feature>
<comment type="function">
    <text evidence="1">NDH-1 shuttles electrons from NADH, via FMN and iron-sulfur (Fe-S) centers, to quinones in the respiratory chain. The immediate electron acceptor for the enzyme in this species is believed to be ubiquinone. Couples the redox reaction to proton translocation (for every two electrons transferred, four hydrogen ions are translocated across the cytoplasmic membrane), and thus conserves the redox energy in a proton gradient.</text>
</comment>
<comment type="catalytic activity">
    <reaction evidence="1">
        <text>a quinone + NADH + 5 H(+)(in) = a quinol + NAD(+) + 4 H(+)(out)</text>
        <dbReference type="Rhea" id="RHEA:57888"/>
        <dbReference type="ChEBI" id="CHEBI:15378"/>
        <dbReference type="ChEBI" id="CHEBI:24646"/>
        <dbReference type="ChEBI" id="CHEBI:57540"/>
        <dbReference type="ChEBI" id="CHEBI:57945"/>
        <dbReference type="ChEBI" id="CHEBI:132124"/>
    </reaction>
</comment>
<comment type="cofactor">
    <cofactor evidence="1">
        <name>[4Fe-4S] cluster</name>
        <dbReference type="ChEBI" id="CHEBI:49883"/>
    </cofactor>
    <text evidence="1">Binds 1 [4Fe-4S] cluster.</text>
</comment>
<comment type="subunit">
    <text evidence="1">NDH-1 is composed of 14 different subunits. Subunits NuoB, C, D, E, F, and G constitute the peripheral sector of the complex.</text>
</comment>
<comment type="subcellular location">
    <subcellularLocation>
        <location evidence="1">Cell inner membrane</location>
        <topology evidence="1">Peripheral membrane protein</topology>
        <orientation evidence="1">Cytoplasmic side</orientation>
    </subcellularLocation>
</comment>
<comment type="similarity">
    <text evidence="1">Belongs to the complex I 20 kDa subunit family.</text>
</comment>
<evidence type="ECO:0000255" key="1">
    <source>
        <dbReference type="HAMAP-Rule" id="MF_01356"/>
    </source>
</evidence>